<proteinExistence type="predicted"/>
<accession>P68478</accession>
<accession>P04306</accession>
<protein>
    <recommendedName>
        <fullName>Uncharacterized 7.9 kDa protein</fullName>
    </recommendedName>
</protein>
<sequence length="72" mass="7877">MIVAWFLLLILLEKHGLPMTQGSVNFLILSDLIFFDPLQAKSGSSLQNTDLFKCMLAINGLGPLSNTSVKIV</sequence>
<reference key="1">
    <citation type="journal article" date="1986" name="Virology">
        <title>Nucleotide sequence and genetic map of the 16-kb vaccinia virus HindIII D fragment.</title>
        <authorList>
            <person name="Niles E.G."/>
            <person name="Condit R.C."/>
            <person name="Caro P."/>
            <person name="Davidson K."/>
            <person name="Matusick L."/>
            <person name="Seto J."/>
        </authorList>
    </citation>
    <scope>NUCLEOTIDE SEQUENCE [GENOMIC DNA]</scope>
</reference>
<feature type="chain" id="PRO_0000099691" description="Uncharacterized 7.9 kDa protein">
    <location>
        <begin position="1"/>
        <end position="72"/>
    </location>
</feature>
<dbReference type="EMBL" id="M15058">
    <property type="protein sequence ID" value="AAA48260.1"/>
    <property type="molecule type" value="Genomic_DNA"/>
</dbReference>
<dbReference type="PIR" id="A03880">
    <property type="entry name" value="QQVZ9"/>
</dbReference>
<organism>
    <name type="scientific">Vaccinia virus (strain Western Reserve)</name>
    <name type="common">VACV</name>
    <name type="synonym">Vaccinia virus (strain WR)</name>
    <dbReference type="NCBI Taxonomy" id="10254"/>
    <lineage>
        <taxon>Viruses</taxon>
        <taxon>Varidnaviria</taxon>
        <taxon>Bamfordvirae</taxon>
        <taxon>Nucleocytoviricota</taxon>
        <taxon>Pokkesviricetes</taxon>
        <taxon>Chitovirales</taxon>
        <taxon>Poxviridae</taxon>
        <taxon>Chordopoxvirinae</taxon>
        <taxon>Orthopoxvirus</taxon>
        <taxon>Vaccinia virus</taxon>
    </lineage>
</organism>
<name>YVDD_VACCW</name>
<organismHost>
    <name type="scientific">Bos taurus</name>
    <name type="common">Bovine</name>
    <dbReference type="NCBI Taxonomy" id="9913"/>
</organismHost>
<gene>
    <name type="ORF">D ORF D</name>
</gene>